<sequence length="634" mass="74782">MLKVLISPLGVGDTNTDVYKRQYKTAEYKFEGDIDGIESPFVLSVLIEKLKVDKVIVVGTAKSMWEKLYEYYAKEVGEFDEEYWIEIGKKVGMSKYDNYALSEEDLKKIEKVIDKYLKKINPNAVGGSKCKIIKYGIDKDEIWENFDLFMSLINEVNDGDEIYLDITHSFRSIPLFMYVMLEFMRYFKNVKLKGIYYGMLDVIRELGHAPVVDLSPIFEISEWIRGMYEFTTYGNSYLISKLLENEDKEIAEKLQKISRYIDANYLKELREEVKTLKPLLNEKKDTGRFLKYFIPELHKFIDKLKYEDSDFEFQISMAKWNFDNKKYSSGYLCLTDSIFWKLCELYNLPSVYKNREVMKGIIYNPSLNKKYSAFGSIKDMHYKRLRNIRNKIAHADVSKKGDDFNPENDLEDVVNLLKNVNLPDFDKIIEDLLLDVKNNQNNKTLKLLKNILNIQIIRKIIKAYNFESNEIYWDFVSGYLLNKNNKCNNEKLREIIEIFHKNIEDAGELEEAFNFVKNTEDEELLDSLALQNAIMHYALFKLSNAYNIKNKEDKEAIKWVLLNQNLCSKHPILKEINNNYHKIFKNKDKPMSNEILEASKNIIRLLNSDLSEIKDSVPLNLIIIRYRSYKNNRR</sequence>
<reference key="1">
    <citation type="journal article" date="1996" name="Science">
        <title>Complete genome sequence of the methanogenic archaeon, Methanococcus jannaschii.</title>
        <authorList>
            <person name="Bult C.J."/>
            <person name="White O."/>
            <person name="Olsen G.J."/>
            <person name="Zhou L."/>
            <person name="Fleischmann R.D."/>
            <person name="Sutton G.G."/>
            <person name="Blake J.A."/>
            <person name="FitzGerald L.M."/>
            <person name="Clayton R.A."/>
            <person name="Gocayne J.D."/>
            <person name="Kerlavage A.R."/>
            <person name="Dougherty B.A."/>
            <person name="Tomb J.-F."/>
            <person name="Adams M.D."/>
            <person name="Reich C.I."/>
            <person name="Overbeek R."/>
            <person name="Kirkness E.F."/>
            <person name="Weinstock K.G."/>
            <person name="Merrick J.M."/>
            <person name="Glodek A."/>
            <person name="Scott J.L."/>
            <person name="Geoghagen N.S.M."/>
            <person name="Weidman J.F."/>
            <person name="Fuhrmann J.L."/>
            <person name="Nguyen D."/>
            <person name="Utterback T.R."/>
            <person name="Kelley J.M."/>
            <person name="Peterson J.D."/>
            <person name="Sadow P.W."/>
            <person name="Hanna M.C."/>
            <person name="Cotton M.D."/>
            <person name="Roberts K.M."/>
            <person name="Hurst M.A."/>
            <person name="Kaine B.P."/>
            <person name="Borodovsky M."/>
            <person name="Klenk H.-P."/>
            <person name="Fraser C.M."/>
            <person name="Smith H.O."/>
            <person name="Woese C.R."/>
            <person name="Venter J.C."/>
        </authorList>
    </citation>
    <scope>NUCLEOTIDE SEQUENCE [LARGE SCALE GENOMIC DNA]</scope>
    <source>
        <strain>ATCC 43067 / DSM 2661 / JAL-1 / JCM 10045 / NBRC 100440</strain>
    </source>
</reference>
<protein>
    <recommendedName>
        <fullName>CRISPR-associated protein MJ1674</fullName>
    </recommendedName>
</protein>
<organism>
    <name type="scientific">Methanocaldococcus jannaschii (strain ATCC 43067 / DSM 2661 / JAL-1 / JCM 10045 / NBRC 100440)</name>
    <name type="common">Methanococcus jannaschii</name>
    <dbReference type="NCBI Taxonomy" id="243232"/>
    <lineage>
        <taxon>Archaea</taxon>
        <taxon>Methanobacteriati</taxon>
        <taxon>Methanobacteriota</taxon>
        <taxon>Methanomada group</taxon>
        <taxon>Methanococci</taxon>
        <taxon>Methanococcales</taxon>
        <taxon>Methanocaldococcaceae</taxon>
        <taxon>Methanocaldococcus</taxon>
    </lineage>
</organism>
<evidence type="ECO:0000305" key="1"/>
<accession>Q59068</accession>
<proteinExistence type="predicted"/>
<dbReference type="EMBL" id="L77117">
    <property type="protein sequence ID" value="AAB99696.1"/>
    <property type="molecule type" value="Genomic_DNA"/>
</dbReference>
<dbReference type="PIR" id="H64508">
    <property type="entry name" value="H64508"/>
</dbReference>
<dbReference type="RefSeq" id="WP_010871198.1">
    <property type="nucleotide sequence ID" value="NC_000909.1"/>
</dbReference>
<dbReference type="SMR" id="Q59068"/>
<dbReference type="STRING" id="243232.MJ_1674"/>
<dbReference type="PaxDb" id="243232-MJ_1674"/>
<dbReference type="EnsemblBacteria" id="AAB99696">
    <property type="protein sequence ID" value="AAB99696"/>
    <property type="gene ID" value="MJ_1674"/>
</dbReference>
<dbReference type="GeneID" id="1452583"/>
<dbReference type="KEGG" id="mja:MJ_1674"/>
<dbReference type="eggNOG" id="arCOG07641">
    <property type="taxonomic scope" value="Archaea"/>
</dbReference>
<dbReference type="HOGENOM" id="CLU_025124_2_0_2"/>
<dbReference type="InParanoid" id="Q59068"/>
<dbReference type="OrthoDB" id="116435at2157"/>
<dbReference type="Proteomes" id="UP000000805">
    <property type="component" value="Chromosome"/>
</dbReference>
<dbReference type="GO" id="GO:0051607">
    <property type="term" value="P:defense response to virus"/>
    <property type="evidence" value="ECO:0007669"/>
    <property type="project" value="UniProtKB-KW"/>
</dbReference>
<dbReference type="CDD" id="cd09668">
    <property type="entry name" value="Csx1_III-U"/>
    <property type="match status" value="1"/>
</dbReference>
<dbReference type="Gene3D" id="3.40.50.10640">
    <property type="entry name" value="SSO1389-like"/>
    <property type="match status" value="1"/>
</dbReference>
<dbReference type="InterPro" id="IPR013383">
    <property type="entry name" value="CRISPR-assoc_prot_DxTHG_CS"/>
</dbReference>
<dbReference type="InterPro" id="IPR011742">
    <property type="entry name" value="CRISPR-assoc_prot_TM1812"/>
</dbReference>
<dbReference type="NCBIfam" id="TIGR02221">
    <property type="entry name" value="cas_TM1812"/>
    <property type="match status" value="1"/>
</dbReference>
<dbReference type="NCBIfam" id="TIGR02549">
    <property type="entry name" value="CRISPR_DxTHG"/>
    <property type="match status" value="1"/>
</dbReference>
<dbReference type="SUPFAM" id="SSF160980">
    <property type="entry name" value="SSO1389-like"/>
    <property type="match status" value="1"/>
</dbReference>
<feature type="chain" id="PRO_0000107472" description="CRISPR-associated protein MJ1674">
    <location>
        <begin position="1"/>
        <end position="634"/>
    </location>
</feature>
<comment type="function">
    <text evidence="1">CRISPR (clustered regularly interspaced short palindromic repeat) is an adaptive immune system that provides protection against mobile genetic elements (viruses, transposable elements and conjugative plasmids). CRISPR clusters contain spacers, sequences complementary to antecedent mobile elements, and target invading nucleic acids. CRISPR clusters are transcribed and processed into CRISPR RNA (crRNA). The type III Csm effector complex binds crRNA and acts as a crRNA-guided RNase, DNase and cyclic oligoadenylate synthase; binding of target RNA cognate to the crRNA is required for all activities.</text>
</comment>
<comment type="miscellaneous">
    <text evidence="1">Encoded in a type III-A CRISPR locus.</text>
</comment>
<keyword id="KW-0051">Antiviral defense</keyword>
<keyword id="KW-1185">Reference proteome</keyword>
<gene>
    <name type="ordered locus">MJ1674</name>
</gene>
<name>Y1674_METJA</name>